<organism>
    <name type="scientific">Papio hamadryas</name>
    <name type="common">Hamadryas baboon</name>
    <dbReference type="NCBI Taxonomy" id="9557"/>
    <lineage>
        <taxon>Eukaryota</taxon>
        <taxon>Metazoa</taxon>
        <taxon>Chordata</taxon>
        <taxon>Craniata</taxon>
        <taxon>Vertebrata</taxon>
        <taxon>Euteleostomi</taxon>
        <taxon>Mammalia</taxon>
        <taxon>Eutheria</taxon>
        <taxon>Euarchontoglires</taxon>
        <taxon>Primates</taxon>
        <taxon>Haplorrhini</taxon>
        <taxon>Catarrhini</taxon>
        <taxon>Cercopithecidae</taxon>
        <taxon>Cercopithecinae</taxon>
        <taxon>Papio</taxon>
    </lineage>
</organism>
<comment type="function">
    <text>Major secreted protease of mast cells with suspected roles in vasoactive peptide generation, extracellular matrix degradation, and regulation of gland secretion.</text>
</comment>
<comment type="catalytic activity">
    <reaction>
        <text>Preferential cleavage: Phe-|-Xaa &gt; Tyr-|-Xaa &gt; Trp-|-Xaa &gt; Leu-|-Xaa.</text>
        <dbReference type="EC" id="3.4.21.39"/>
    </reaction>
</comment>
<comment type="subcellular location">
    <subcellularLocation>
        <location>Secreted</location>
    </subcellularLocation>
    <subcellularLocation>
        <location>Cytoplasmic granule</location>
    </subcellularLocation>
    <text>Mast cell granules.</text>
</comment>
<comment type="similarity">
    <text evidence="3">Belongs to the peptidase S1 family. Granzyme subfamily.</text>
</comment>
<dbReference type="EC" id="3.4.21.39"/>
<dbReference type="EMBL" id="U38521">
    <property type="protein sequence ID" value="AAA91160.1"/>
    <property type="molecule type" value="mRNA"/>
</dbReference>
<dbReference type="EMBL" id="U38463">
    <property type="protein sequence ID" value="AAA91159.1"/>
    <property type="molecule type" value="Genomic_DNA"/>
</dbReference>
<dbReference type="SMR" id="P52195"/>
<dbReference type="MEROPS" id="S01.140"/>
<dbReference type="GlyCosmos" id="P52195">
    <property type="glycosylation" value="2 sites, No reported glycans"/>
</dbReference>
<dbReference type="GO" id="GO:0005737">
    <property type="term" value="C:cytoplasm"/>
    <property type="evidence" value="ECO:0007669"/>
    <property type="project" value="TreeGrafter"/>
</dbReference>
<dbReference type="GO" id="GO:0005615">
    <property type="term" value="C:extracellular space"/>
    <property type="evidence" value="ECO:0007669"/>
    <property type="project" value="TreeGrafter"/>
</dbReference>
<dbReference type="GO" id="GO:0043231">
    <property type="term" value="C:intracellular membrane-bounded organelle"/>
    <property type="evidence" value="ECO:0007669"/>
    <property type="project" value="TreeGrafter"/>
</dbReference>
<dbReference type="GO" id="GO:0004252">
    <property type="term" value="F:serine-type endopeptidase activity"/>
    <property type="evidence" value="ECO:0007669"/>
    <property type="project" value="UniProtKB-EC"/>
</dbReference>
<dbReference type="GO" id="GO:0006508">
    <property type="term" value="P:proteolysis"/>
    <property type="evidence" value="ECO:0007669"/>
    <property type="project" value="UniProtKB-KW"/>
</dbReference>
<dbReference type="CDD" id="cd00190">
    <property type="entry name" value="Tryp_SPc"/>
    <property type="match status" value="1"/>
</dbReference>
<dbReference type="FunFam" id="2.40.10.10:FF:000014">
    <property type="entry name" value="Complement factor D"/>
    <property type="match status" value="1"/>
</dbReference>
<dbReference type="FunFam" id="2.40.10.10:FF:000005">
    <property type="entry name" value="Serine protease 37"/>
    <property type="match status" value="1"/>
</dbReference>
<dbReference type="Gene3D" id="2.40.10.10">
    <property type="entry name" value="Trypsin-like serine proteases"/>
    <property type="match status" value="2"/>
</dbReference>
<dbReference type="InterPro" id="IPR009003">
    <property type="entry name" value="Peptidase_S1_PA"/>
</dbReference>
<dbReference type="InterPro" id="IPR043504">
    <property type="entry name" value="Peptidase_S1_PA_chymotrypsin"/>
</dbReference>
<dbReference type="InterPro" id="IPR001314">
    <property type="entry name" value="Peptidase_S1A"/>
</dbReference>
<dbReference type="InterPro" id="IPR001254">
    <property type="entry name" value="Trypsin_dom"/>
</dbReference>
<dbReference type="InterPro" id="IPR018114">
    <property type="entry name" value="TRYPSIN_HIS"/>
</dbReference>
<dbReference type="InterPro" id="IPR033116">
    <property type="entry name" value="TRYPSIN_SER"/>
</dbReference>
<dbReference type="PANTHER" id="PTHR24271:SF24">
    <property type="entry name" value="CHYMASE"/>
    <property type="match status" value="1"/>
</dbReference>
<dbReference type="PANTHER" id="PTHR24271">
    <property type="entry name" value="KALLIKREIN-RELATED"/>
    <property type="match status" value="1"/>
</dbReference>
<dbReference type="Pfam" id="PF00089">
    <property type="entry name" value="Trypsin"/>
    <property type="match status" value="1"/>
</dbReference>
<dbReference type="PRINTS" id="PR00722">
    <property type="entry name" value="CHYMOTRYPSIN"/>
</dbReference>
<dbReference type="SMART" id="SM00020">
    <property type="entry name" value="Tryp_SPc"/>
    <property type="match status" value="1"/>
</dbReference>
<dbReference type="SUPFAM" id="SSF50494">
    <property type="entry name" value="Trypsin-like serine proteases"/>
    <property type="match status" value="1"/>
</dbReference>
<dbReference type="PROSITE" id="PS50240">
    <property type="entry name" value="TRYPSIN_DOM"/>
    <property type="match status" value="1"/>
</dbReference>
<dbReference type="PROSITE" id="PS00134">
    <property type="entry name" value="TRYPSIN_HIS"/>
    <property type="match status" value="1"/>
</dbReference>
<dbReference type="PROSITE" id="PS00135">
    <property type="entry name" value="TRYPSIN_SER"/>
    <property type="match status" value="1"/>
</dbReference>
<sequence>MLLLPLPLLLLFLCSRAEAGEIIGGTECKPHSRPYMAYLEIVTSNGPSKSCGGFLIRRNFVLTAAHCAGRSITVTLGAHNITEKEDTWQELEVIKQFRHPKYNTSTLHHDIMLLKLKEKASLTLAVGTLPFPSQFNFVPPGRMCRVAGWGRTGVLKPGSDTLQEVKLRLMDPQACSHFRYFDHNLQLCVGNPRKTKSAFKGDSGGPLLCAGVAQGIVSYGRLDAKPPAVFTRISHYRPWINKILQAN</sequence>
<reference key="1">
    <citation type="submission" date="1995-10" db="EMBL/GenBank/DDBJ databases">
        <authorList>
            <person name="Liao Y."/>
            <person name="Karnik S."/>
            <person name="Husain A."/>
        </authorList>
    </citation>
    <scope>NUCLEOTIDE SEQUENCE [GENOMIC DNA / MRNA]</scope>
</reference>
<name>CMA1_PAPHA</name>
<evidence type="ECO:0000250" key="1"/>
<evidence type="ECO:0000255" key="2"/>
<evidence type="ECO:0000255" key="3">
    <source>
        <dbReference type="PROSITE-ProRule" id="PRU00274"/>
    </source>
</evidence>
<feature type="signal peptide" evidence="1">
    <location>
        <begin position="1"/>
        <end position="19"/>
    </location>
</feature>
<feature type="propeptide" id="PRO_0000027437" description="Activation peptide">
    <location>
        <begin position="20"/>
        <end position="21"/>
    </location>
</feature>
<feature type="chain" id="PRO_0000027438" description="Chymase">
    <location>
        <begin position="22"/>
        <end position="247"/>
    </location>
</feature>
<feature type="domain" description="Peptidase S1" evidence="3">
    <location>
        <begin position="22"/>
        <end position="245"/>
    </location>
</feature>
<feature type="active site" description="Charge relay system" evidence="1">
    <location>
        <position position="66"/>
    </location>
</feature>
<feature type="active site" description="Charge relay system" evidence="1">
    <location>
        <position position="110"/>
    </location>
</feature>
<feature type="active site" description="Charge relay system" evidence="1">
    <location>
        <position position="203"/>
    </location>
</feature>
<feature type="glycosylation site" description="N-linked (GlcNAc...) asparagine" evidence="2">
    <location>
        <position position="80"/>
    </location>
</feature>
<feature type="glycosylation site" description="N-linked (GlcNAc...) asparagine" evidence="2">
    <location>
        <position position="103"/>
    </location>
</feature>
<feature type="disulfide bond" evidence="3">
    <location>
        <begin position="51"/>
        <end position="67"/>
    </location>
</feature>
<feature type="disulfide bond" evidence="3">
    <location>
        <begin position="144"/>
        <end position="209"/>
    </location>
</feature>
<feature type="disulfide bond" evidence="3">
    <location>
        <begin position="175"/>
        <end position="188"/>
    </location>
</feature>
<proteinExistence type="evidence at transcript level"/>
<accession>P52195</accession>
<keyword id="KW-1015">Disulfide bond</keyword>
<keyword id="KW-0325">Glycoprotein</keyword>
<keyword id="KW-0378">Hydrolase</keyword>
<keyword id="KW-0645">Protease</keyword>
<keyword id="KW-0964">Secreted</keyword>
<keyword id="KW-0720">Serine protease</keyword>
<keyword id="KW-0732">Signal</keyword>
<keyword id="KW-0865">Zymogen</keyword>
<gene>
    <name type="primary">CMA1</name>
    <name type="synonym">CHM</name>
</gene>
<protein>
    <recommendedName>
        <fullName>Chymase</fullName>
        <ecNumber>3.4.21.39</ecNumber>
    </recommendedName>
    <alternativeName>
        <fullName>Alpha-chymase</fullName>
    </alternativeName>
    <alternativeName>
        <fullName>Mast cell chymase</fullName>
    </alternativeName>
</protein>